<keyword id="KW-0002">3D-structure</keyword>
<keyword id="KW-0025">Alternative splicing</keyword>
<keyword id="KW-0966">Cell projection</keyword>
<keyword id="KW-0175">Coiled coil</keyword>
<keyword id="KW-0963">Cytoplasm</keyword>
<keyword id="KW-0597">Phosphoprotein</keyword>
<keyword id="KW-1267">Proteomics identification</keyword>
<keyword id="KW-1185">Reference proteome</keyword>
<keyword id="KW-0677">Repeat</keyword>
<keyword id="KW-0770">Synapse</keyword>
<sequence length="1257" mass="143291">MMCEVMPTINEDTPMSQRGSQSSGSDSDSHFEQLMVNMLDERDRLLDTLRETQESLSLAQQRLQDVIYDRDSLQRQLNSALPQDIESLTGGLAGSKGADPPEFAALTKELNACREQLLEKEEEISELKAERNNTRLLLEHLECLVSRHERSLRMTVVKRQAQSPSGVSSEVEVLKALKSLFEHHKALDEKVRERLRVSLERVSALEEELAAANQEIVALREQNVHIQRKMASSEGSTESEHLEGMEPGQKVHEKRLSNGSIDSTDETSQIVELQELLEKQNYEMAQMKERLAALSSRVGEVEQEAETARKDLIKTEEMNTKYQRDIREAMAQKEDMEERITTLEKRYLSAQRESTSIHDMNDKLENELANKEAILRQMEEKNRQLQERLELAEQKLQQTMRKAETLPEVEAELAQRIAALTKAEERHGNIEERMRHLEGQLEEKNQELQRARQREKMNEEHNKRLSDTVDRLLTESNERLQLHLKERMAALEEKNVLIQESETFRKNLEESLHDKERLAEEIEKLRSELDQLKMRTGSLIEPTIPRTHLDTSAELRYSVGSLVDSQSDYRTTKVIRRPRRGRMGVRRDEPKVKSLGDHEWNRTQQIGVLSSHPFESDTEMSDIDDDDRETIFSSMDLLSPSGHSDAQTLAMMLQEQLDAINKEIRLIQEEKESTELRAEEIENRVASVSLEGLNLARVHPGTSITASVTASSLASSSPPSGHSTPKLTPRSPAREMDRMGVMTLPSDLRKHRRKIAVVEEDGREDKATIKCETSPPPTPRALRMTHTLPSSYHNDARSSLSVSLEPESLGLGSANSSQDSLHKAPKKKGIKSSIGRLFGKKEKARLGQLRGFMETEAAAQESLGLGKLGTQAEKDRRLKKKHELLEEARRKGLPFAQWDGPTVVAWLELWLGMPAWYVAACRANVKSGAIMSALSDTEIQREIGISNPLHRLKLRLAIQEMVSLTSPSAPPTSRTPSGNVWVTHEEMENLAAPAKTKESEEGSWAQCPVFLQTLAYGDMNHEWIGNEWLPSLGLPQYRSYFMECLVDARMLDHLTKKDLRVHLKMVDSFHRTSLQYGIMCLKRLNYDRKELERRREASQHEIKDVLVWSNDRVIRWIQAIGLREYANNILESGVHGSLIALDENFDYSSLALLLQIPTQNTQARQILEREYNNLLALGTERRLDESDDKNFRRGSTWRRQFPPREVHGISMMPGSSETLPAGFRLTTTSGQSRKMTTDVASSRLQRLDNSTVRTYSC</sequence>
<name>LIPA2_HUMAN</name>
<dbReference type="EMBL" id="AF034799">
    <property type="protein sequence ID" value="AAC26100.1"/>
    <property type="molecule type" value="mRNA"/>
</dbReference>
<dbReference type="EMBL" id="AK123372">
    <property type="protein sequence ID" value="BAG53897.1"/>
    <property type="molecule type" value="mRNA"/>
</dbReference>
<dbReference type="EMBL" id="AK126971">
    <property type="protein sequence ID" value="BAG54412.1"/>
    <property type="molecule type" value="mRNA"/>
</dbReference>
<dbReference type="EMBL" id="AK294505">
    <property type="protein sequence ID" value="BAH11792.1"/>
    <property type="molecule type" value="mRNA"/>
</dbReference>
<dbReference type="EMBL" id="AK296380">
    <property type="protein sequence ID" value="BAH12335.1"/>
    <property type="molecule type" value="mRNA"/>
</dbReference>
<dbReference type="EMBL" id="AK299853">
    <property type="protein sequence ID" value="BAH13149.1"/>
    <property type="molecule type" value="mRNA"/>
</dbReference>
<dbReference type="EMBL" id="AC011316">
    <property type="status" value="NOT_ANNOTATED_CDS"/>
    <property type="molecule type" value="Genomic_DNA"/>
</dbReference>
<dbReference type="EMBL" id="AC069228">
    <property type="status" value="NOT_ANNOTATED_CDS"/>
    <property type="molecule type" value="Genomic_DNA"/>
</dbReference>
<dbReference type="EMBL" id="AC078920">
    <property type="status" value="NOT_ANNOTATED_CDS"/>
    <property type="molecule type" value="Genomic_DNA"/>
</dbReference>
<dbReference type="EMBL" id="AC079363">
    <property type="status" value="NOT_ANNOTATED_CDS"/>
    <property type="molecule type" value="Genomic_DNA"/>
</dbReference>
<dbReference type="EMBL" id="AC079408">
    <property type="status" value="NOT_ANNOTATED_CDS"/>
    <property type="molecule type" value="Genomic_DNA"/>
</dbReference>
<dbReference type="EMBL" id="BC104912">
    <property type="protein sequence ID" value="AAI04913.1"/>
    <property type="molecule type" value="mRNA"/>
</dbReference>
<dbReference type="EMBL" id="BC143485">
    <property type="protein sequence ID" value="AAI43486.1"/>
    <property type="molecule type" value="mRNA"/>
</dbReference>
<dbReference type="CCDS" id="CCDS55850.1">
    <molecule id="O75334-8"/>
</dbReference>
<dbReference type="CCDS" id="CCDS55851.1">
    <molecule id="O75334-7"/>
</dbReference>
<dbReference type="CCDS" id="CCDS55852.1">
    <molecule id="O75334-6"/>
</dbReference>
<dbReference type="CCDS" id="CCDS55853.1">
    <molecule id="O75334-5"/>
</dbReference>
<dbReference type="CCDS" id="CCDS55854.1">
    <molecule id="O75334-2"/>
</dbReference>
<dbReference type="CCDS" id="CCDS55855.1">
    <molecule id="O75334-4"/>
</dbReference>
<dbReference type="CCDS" id="CCDS55856.1">
    <molecule id="O75334-3"/>
</dbReference>
<dbReference type="CCDS" id="CCDS55857.1">
    <molecule id="O75334-1"/>
</dbReference>
<dbReference type="RefSeq" id="NP_001207403.1">
    <molecule id="O75334-2"/>
    <property type="nucleotide sequence ID" value="NM_001220474.3"/>
</dbReference>
<dbReference type="RefSeq" id="NP_001207404.1">
    <molecule id="O75334-4"/>
    <property type="nucleotide sequence ID" value="NM_001220475.2"/>
</dbReference>
<dbReference type="RefSeq" id="NP_001207405.1">
    <molecule id="O75334-3"/>
    <property type="nucleotide sequence ID" value="NM_001220476.2"/>
</dbReference>
<dbReference type="RefSeq" id="NP_001207406.1">
    <molecule id="O75334-5"/>
    <property type="nucleotide sequence ID" value="NM_001220477.2"/>
</dbReference>
<dbReference type="RefSeq" id="NP_001207407.1">
    <molecule id="O75334-6"/>
    <property type="nucleotide sequence ID" value="NM_001220478.2"/>
</dbReference>
<dbReference type="RefSeq" id="NP_001207408.1">
    <molecule id="O75334-7"/>
    <property type="nucleotide sequence ID" value="NM_001220479.3"/>
</dbReference>
<dbReference type="RefSeq" id="NP_001207409.1">
    <molecule id="O75334-8"/>
    <property type="nucleotide sequence ID" value="NM_001220480.3"/>
</dbReference>
<dbReference type="RefSeq" id="NP_003616.2">
    <molecule id="O75334-1"/>
    <property type="nucleotide sequence ID" value="NM_003625.4"/>
</dbReference>
<dbReference type="RefSeq" id="XP_016875569.1">
    <property type="nucleotide sequence ID" value="XM_017020080.1"/>
</dbReference>
<dbReference type="RefSeq" id="XP_016875571.1">
    <property type="nucleotide sequence ID" value="XM_017020082.1"/>
</dbReference>
<dbReference type="RefSeq" id="XP_047285728.1">
    <molecule id="O75334-1"/>
    <property type="nucleotide sequence ID" value="XM_047429772.1"/>
</dbReference>
<dbReference type="RefSeq" id="XP_047285730.1">
    <molecule id="O75334-3"/>
    <property type="nucleotide sequence ID" value="XM_047429774.1"/>
</dbReference>
<dbReference type="RefSeq" id="XP_047285739.1">
    <molecule id="O75334-4"/>
    <property type="nucleotide sequence ID" value="XM_047429783.1"/>
</dbReference>
<dbReference type="RefSeq" id="XP_054229625.1">
    <molecule id="O75334-1"/>
    <property type="nucleotide sequence ID" value="XM_054373650.1"/>
</dbReference>
<dbReference type="RefSeq" id="XP_054229627.1">
    <molecule id="O75334-3"/>
    <property type="nucleotide sequence ID" value="XM_054373652.1"/>
</dbReference>
<dbReference type="RefSeq" id="XP_054229635.1">
    <molecule id="O75334-4"/>
    <property type="nucleotide sequence ID" value="XM_054373660.1"/>
</dbReference>
<dbReference type="PDB" id="3TAC">
    <property type="method" value="X-ray"/>
    <property type="resolution" value="2.20 A"/>
    <property type="chains" value="B=866-1193"/>
</dbReference>
<dbReference type="PDB" id="3TAD">
    <property type="method" value="X-ray"/>
    <property type="resolution" value="2.90 A"/>
    <property type="chains" value="A/B=866-1193"/>
</dbReference>
<dbReference type="PDB" id="6IUH">
    <property type="method" value="X-ray"/>
    <property type="resolution" value="1.80 A"/>
    <property type="chains" value="C/D=642-671"/>
</dbReference>
<dbReference type="PDB" id="7D2E">
    <property type="method" value="X-ray"/>
    <property type="resolution" value="1.70 A"/>
    <property type="chains" value="A/B/C/D=164-235"/>
</dbReference>
<dbReference type="PDB" id="7D2G">
    <property type="method" value="X-ray"/>
    <property type="resolution" value="1.70 A"/>
    <property type="chains" value="A/B/C/D=102-150"/>
</dbReference>
<dbReference type="PDB" id="7D2H">
    <property type="method" value="X-ray"/>
    <property type="resolution" value="2.20 A"/>
    <property type="chains" value="A/B/C/D=102-163"/>
</dbReference>
<dbReference type="PDBsum" id="3TAC"/>
<dbReference type="PDBsum" id="3TAD"/>
<dbReference type="PDBsum" id="6IUH"/>
<dbReference type="PDBsum" id="7D2E"/>
<dbReference type="PDBsum" id="7D2G"/>
<dbReference type="PDBsum" id="7D2H"/>
<dbReference type="SMR" id="O75334"/>
<dbReference type="BioGRID" id="114071">
    <property type="interactions" value="25"/>
</dbReference>
<dbReference type="FunCoup" id="O75334">
    <property type="interactions" value="288"/>
</dbReference>
<dbReference type="IntAct" id="O75334">
    <property type="interactions" value="15"/>
</dbReference>
<dbReference type="MINT" id="O75334"/>
<dbReference type="STRING" id="9606.ENSP00000450337"/>
<dbReference type="GlyCosmos" id="O75334">
    <property type="glycosylation" value="1 site, 1 glycan"/>
</dbReference>
<dbReference type="GlyGen" id="O75334">
    <property type="glycosylation" value="2 sites, 1 O-linked glycan (1 site)"/>
</dbReference>
<dbReference type="iPTMnet" id="O75334"/>
<dbReference type="PhosphoSitePlus" id="O75334"/>
<dbReference type="BioMuta" id="PPFIA2"/>
<dbReference type="jPOST" id="O75334"/>
<dbReference type="MassIVE" id="O75334"/>
<dbReference type="PaxDb" id="9606-ENSP00000450337"/>
<dbReference type="PeptideAtlas" id="O75334"/>
<dbReference type="ProteomicsDB" id="18200"/>
<dbReference type="ProteomicsDB" id="3766"/>
<dbReference type="ProteomicsDB" id="49902">
    <molecule id="O75334-1"/>
</dbReference>
<dbReference type="ProteomicsDB" id="49903">
    <molecule id="O75334-2"/>
</dbReference>
<dbReference type="ProteomicsDB" id="49904">
    <molecule id="O75334-3"/>
</dbReference>
<dbReference type="ProteomicsDB" id="49905">
    <molecule id="O75334-4"/>
</dbReference>
<dbReference type="ProteomicsDB" id="6548"/>
<dbReference type="ProteomicsDB" id="6751"/>
<dbReference type="Pumba" id="O75334"/>
<dbReference type="Antibodypedia" id="29823">
    <property type="antibodies" value="84 antibodies from 19 providers"/>
</dbReference>
<dbReference type="DNASU" id="8499"/>
<dbReference type="Ensembl" id="ENST00000333447.11">
    <molecule id="O75334-6"/>
    <property type="protein sequence ID" value="ENSP00000327416.8"/>
    <property type="gene ID" value="ENSG00000139220.17"/>
</dbReference>
<dbReference type="Ensembl" id="ENST00000407050.8">
    <molecule id="O75334-5"/>
    <property type="protein sequence ID" value="ENSP00000385093.4"/>
    <property type="gene ID" value="ENSG00000139220.17"/>
</dbReference>
<dbReference type="Ensembl" id="ENST00000443686.7">
    <molecule id="O75334-6"/>
    <property type="protein sequence ID" value="ENSP00000388373.3"/>
    <property type="gene ID" value="ENSG00000139220.17"/>
</dbReference>
<dbReference type="Ensembl" id="ENST00000541017.5">
    <molecule id="O75334-8"/>
    <property type="protein sequence ID" value="ENSP00000445532.1"/>
    <property type="gene ID" value="ENSG00000139220.17"/>
</dbReference>
<dbReference type="Ensembl" id="ENST00000541570.6">
    <molecule id="O75334-7"/>
    <property type="protein sequence ID" value="ENSP00000438337.2"/>
    <property type="gene ID" value="ENSG00000139220.17"/>
</dbReference>
<dbReference type="Ensembl" id="ENST00000548586.5">
    <molecule id="O75334-3"/>
    <property type="protein sequence ID" value="ENSP00000449338.1"/>
    <property type="gene ID" value="ENSG00000139220.17"/>
</dbReference>
<dbReference type="Ensembl" id="ENST00000549325.5">
    <molecule id="O75334-2"/>
    <property type="protein sequence ID" value="ENSP00000450298.1"/>
    <property type="gene ID" value="ENSG00000139220.17"/>
</dbReference>
<dbReference type="Ensembl" id="ENST00000549396.6">
    <molecule id="O75334-1"/>
    <property type="protein sequence ID" value="ENSP00000450337.1"/>
    <property type="gene ID" value="ENSG00000139220.17"/>
</dbReference>
<dbReference type="Ensembl" id="ENST00000552948.5">
    <molecule id="O75334-4"/>
    <property type="protein sequence ID" value="ENSP00000447868.1"/>
    <property type="gene ID" value="ENSG00000139220.17"/>
</dbReference>
<dbReference type="GeneID" id="8499"/>
<dbReference type="KEGG" id="hsa:8499"/>
<dbReference type="MANE-Select" id="ENST00000549396.6">
    <property type="protein sequence ID" value="ENSP00000450337.1"/>
    <property type="RefSeq nucleotide sequence ID" value="NM_003625.5"/>
    <property type="RefSeq protein sequence ID" value="NP_003616.2"/>
</dbReference>
<dbReference type="UCSC" id="uc058rjg.1">
    <molecule id="O75334-1"/>
    <property type="organism name" value="human"/>
</dbReference>
<dbReference type="AGR" id="HGNC:9246"/>
<dbReference type="CTD" id="8499"/>
<dbReference type="DisGeNET" id="8499"/>
<dbReference type="GeneCards" id="PPFIA2"/>
<dbReference type="HGNC" id="HGNC:9246">
    <property type="gene designation" value="PPFIA2"/>
</dbReference>
<dbReference type="HPA" id="ENSG00000139220">
    <property type="expression patterns" value="Group enriched (brain, retina)"/>
</dbReference>
<dbReference type="MIM" id="603143">
    <property type="type" value="gene"/>
</dbReference>
<dbReference type="neXtProt" id="NX_O75334"/>
<dbReference type="OpenTargets" id="ENSG00000139220"/>
<dbReference type="PharmGKB" id="PA33567"/>
<dbReference type="VEuPathDB" id="HostDB:ENSG00000139220"/>
<dbReference type="eggNOG" id="KOG0249">
    <property type="taxonomic scope" value="Eukaryota"/>
</dbReference>
<dbReference type="GeneTree" id="ENSGT01050000244900"/>
<dbReference type="HOGENOM" id="CLU_011689_5_0_1"/>
<dbReference type="InParanoid" id="O75334"/>
<dbReference type="OMA" id="MNEEHNI"/>
<dbReference type="OrthoDB" id="2132119at2759"/>
<dbReference type="PAN-GO" id="O75334">
    <property type="GO annotations" value="2 GO annotations based on evolutionary models"/>
</dbReference>
<dbReference type="PhylomeDB" id="O75334"/>
<dbReference type="TreeFam" id="TF314207"/>
<dbReference type="PathwayCommons" id="O75334"/>
<dbReference type="Reactome" id="R-HSA-181429">
    <property type="pathway name" value="Serotonin Neurotransmitter Release Cycle"/>
</dbReference>
<dbReference type="Reactome" id="R-HSA-181430">
    <property type="pathway name" value="Norepinephrine Neurotransmitter Release Cycle"/>
</dbReference>
<dbReference type="Reactome" id="R-HSA-210500">
    <property type="pathway name" value="Glutamate Neurotransmitter Release Cycle"/>
</dbReference>
<dbReference type="Reactome" id="R-HSA-212676">
    <property type="pathway name" value="Dopamine Neurotransmitter Release Cycle"/>
</dbReference>
<dbReference type="Reactome" id="R-HSA-264642">
    <property type="pathway name" value="Acetylcholine Neurotransmitter Release Cycle"/>
</dbReference>
<dbReference type="Reactome" id="R-HSA-388844">
    <property type="pathway name" value="Receptor-type tyrosine-protein phosphatases"/>
</dbReference>
<dbReference type="SignaLink" id="O75334"/>
<dbReference type="SIGNOR" id="O75334"/>
<dbReference type="BioGRID-ORCS" id="8499">
    <property type="hits" value="16 hits in 1149 CRISPR screens"/>
</dbReference>
<dbReference type="CD-CODE" id="FB4E32DD">
    <property type="entry name" value="Presynaptic clusters and postsynaptic densities"/>
</dbReference>
<dbReference type="ChiTaRS" id="PPFIA2">
    <property type="organism name" value="human"/>
</dbReference>
<dbReference type="EvolutionaryTrace" id="O75334"/>
<dbReference type="GenomeRNAi" id="8499"/>
<dbReference type="Pharos" id="O75334">
    <property type="development level" value="Tbio"/>
</dbReference>
<dbReference type="PRO" id="PR:O75334"/>
<dbReference type="Proteomes" id="UP000005640">
    <property type="component" value="Chromosome 12"/>
</dbReference>
<dbReference type="RNAct" id="O75334">
    <property type="molecule type" value="protein"/>
</dbReference>
<dbReference type="Bgee" id="ENSG00000139220">
    <property type="expression patterns" value="Expressed in cortical plate and 137 other cell types or tissues"/>
</dbReference>
<dbReference type="ExpressionAtlas" id="O75334">
    <property type="expression patterns" value="baseline and differential"/>
</dbReference>
<dbReference type="GO" id="GO:0030424">
    <property type="term" value="C:axon"/>
    <property type="evidence" value="ECO:0007669"/>
    <property type="project" value="GOC"/>
</dbReference>
<dbReference type="GO" id="GO:0009986">
    <property type="term" value="C:cell surface"/>
    <property type="evidence" value="ECO:0007669"/>
    <property type="project" value="UniProtKB-SubCell"/>
</dbReference>
<dbReference type="GO" id="GO:0005737">
    <property type="term" value="C:cytoplasm"/>
    <property type="evidence" value="ECO:0000304"/>
    <property type="project" value="ProtInc"/>
</dbReference>
<dbReference type="GO" id="GO:0005829">
    <property type="term" value="C:cytosol"/>
    <property type="evidence" value="ECO:0000304"/>
    <property type="project" value="Reactome"/>
</dbReference>
<dbReference type="GO" id="GO:0043197">
    <property type="term" value="C:dendritic spine"/>
    <property type="evidence" value="ECO:0000314"/>
    <property type="project" value="UniProtKB"/>
</dbReference>
<dbReference type="GO" id="GO:0070062">
    <property type="term" value="C:extracellular exosome"/>
    <property type="evidence" value="ECO:0007005"/>
    <property type="project" value="UniProtKB"/>
</dbReference>
<dbReference type="GO" id="GO:0098978">
    <property type="term" value="C:glutamatergic synapse"/>
    <property type="evidence" value="ECO:0007669"/>
    <property type="project" value="Ensembl"/>
</dbReference>
<dbReference type="GO" id="GO:0014069">
    <property type="term" value="C:postsynaptic density"/>
    <property type="evidence" value="ECO:0007669"/>
    <property type="project" value="Ensembl"/>
</dbReference>
<dbReference type="GO" id="GO:0048786">
    <property type="term" value="C:presynaptic active zone"/>
    <property type="evidence" value="ECO:0000318"/>
    <property type="project" value="GO_Central"/>
</dbReference>
<dbReference type="GO" id="GO:0042734">
    <property type="term" value="C:presynaptic membrane"/>
    <property type="evidence" value="ECO:0007669"/>
    <property type="project" value="Ensembl"/>
</dbReference>
<dbReference type="GO" id="GO:0008021">
    <property type="term" value="C:synaptic vesicle"/>
    <property type="evidence" value="ECO:0007669"/>
    <property type="project" value="Ensembl"/>
</dbReference>
<dbReference type="GO" id="GO:0098919">
    <property type="term" value="F:structural constituent of postsynaptic density"/>
    <property type="evidence" value="ECO:0007669"/>
    <property type="project" value="Ensembl"/>
</dbReference>
<dbReference type="GO" id="GO:0099181">
    <property type="term" value="F:structural constituent of presynapse"/>
    <property type="evidence" value="ECO:0007669"/>
    <property type="project" value="Ensembl"/>
</dbReference>
<dbReference type="GO" id="GO:0007160">
    <property type="term" value="P:cell-matrix adhesion"/>
    <property type="evidence" value="ECO:0000304"/>
    <property type="project" value="ProtInc"/>
</dbReference>
<dbReference type="GO" id="GO:0099519">
    <property type="term" value="P:dense core granule cytoskeletal transport"/>
    <property type="evidence" value="ECO:0000315"/>
    <property type="project" value="UniProtKB"/>
</dbReference>
<dbReference type="GO" id="GO:0060998">
    <property type="term" value="P:regulation of dendritic spine development"/>
    <property type="evidence" value="ECO:0000315"/>
    <property type="project" value="UniProtKB"/>
</dbReference>
<dbReference type="GO" id="GO:0061001">
    <property type="term" value="P:regulation of dendritic spine morphogenesis"/>
    <property type="evidence" value="ECO:0000315"/>
    <property type="project" value="UniProtKB"/>
</dbReference>
<dbReference type="GO" id="GO:2000300">
    <property type="term" value="P:regulation of synaptic vesicle exocytosis"/>
    <property type="evidence" value="ECO:0007669"/>
    <property type="project" value="Ensembl"/>
</dbReference>
<dbReference type="GO" id="GO:0050808">
    <property type="term" value="P:synapse organization"/>
    <property type="evidence" value="ECO:0000318"/>
    <property type="project" value="GO_Central"/>
</dbReference>
<dbReference type="CDD" id="cd09562">
    <property type="entry name" value="SAM_liprin-alpha1_2_3_4_repeat1"/>
    <property type="match status" value="1"/>
</dbReference>
<dbReference type="CDD" id="cd09565">
    <property type="entry name" value="SAM_liprin-alpha1_2_3_4_repeat2"/>
    <property type="match status" value="1"/>
</dbReference>
<dbReference type="CDD" id="cd09568">
    <property type="entry name" value="SAM_liprin-alpha1_2_3_4_repeat3"/>
    <property type="match status" value="1"/>
</dbReference>
<dbReference type="FunFam" id="1.10.150.50:FF:000003">
    <property type="entry name" value="liprin-alpha-2 isoform X1"/>
    <property type="match status" value="1"/>
</dbReference>
<dbReference type="FunFam" id="1.10.150.50:FF:000002">
    <property type="entry name" value="PTPRF interacting protein alpha 1"/>
    <property type="match status" value="1"/>
</dbReference>
<dbReference type="FunFam" id="1.10.150.50:FF:000004">
    <property type="entry name" value="PTPRF interacting protein alpha 1"/>
    <property type="match status" value="1"/>
</dbReference>
<dbReference type="Gene3D" id="1.10.150.50">
    <property type="entry name" value="Transcription Factor, Ets-1"/>
    <property type="match status" value="3"/>
</dbReference>
<dbReference type="InterPro" id="IPR029515">
    <property type="entry name" value="Liprin"/>
</dbReference>
<dbReference type="InterPro" id="IPR037620">
    <property type="entry name" value="Liprin-alpha_SAM_rpt_1"/>
</dbReference>
<dbReference type="InterPro" id="IPR037621">
    <property type="entry name" value="Liprin-alpha_SAM_rpt_2"/>
</dbReference>
<dbReference type="InterPro" id="IPR037622">
    <property type="entry name" value="Liprin-alpha_SAM_rpt_3"/>
</dbReference>
<dbReference type="InterPro" id="IPR001660">
    <property type="entry name" value="SAM"/>
</dbReference>
<dbReference type="InterPro" id="IPR013761">
    <property type="entry name" value="SAM/pointed_sf"/>
</dbReference>
<dbReference type="PANTHER" id="PTHR12587">
    <property type="entry name" value="LAR INTERACTING PROTEIN LIP -RELATED PROTEIN"/>
    <property type="match status" value="1"/>
</dbReference>
<dbReference type="PANTHER" id="PTHR12587:SF6">
    <property type="entry name" value="LIPRIN-ALPHA-2"/>
    <property type="match status" value="1"/>
</dbReference>
<dbReference type="Pfam" id="PF00536">
    <property type="entry name" value="SAM_1"/>
    <property type="match status" value="2"/>
</dbReference>
<dbReference type="Pfam" id="PF07647">
    <property type="entry name" value="SAM_2"/>
    <property type="match status" value="1"/>
</dbReference>
<dbReference type="SMART" id="SM00454">
    <property type="entry name" value="SAM"/>
    <property type="match status" value="3"/>
</dbReference>
<dbReference type="SUPFAM" id="SSF47769">
    <property type="entry name" value="SAM/Pointed domain"/>
    <property type="match status" value="3"/>
</dbReference>
<dbReference type="PROSITE" id="PS50105">
    <property type="entry name" value="SAM_DOMAIN"/>
    <property type="match status" value="3"/>
</dbReference>
<reference key="1">
    <citation type="journal article" date="1998" name="J. Biol. Chem.">
        <title>Liprins, a family of LAR transmembrane protein-tyrosine phosphatase-interacting proteins.</title>
        <authorList>
            <person name="Serra-Pages C."/>
            <person name="Medley Q.G."/>
            <person name="Tang M."/>
            <person name="Hart A."/>
            <person name="Streuli M."/>
        </authorList>
    </citation>
    <scope>NUCLEOTIDE SEQUENCE [MRNA] (ISOFORM 1)</scope>
    <scope>TISSUE SPECIFICITY</scope>
    <scope>FUNCTION</scope>
    <scope>SUBCELLULAR LOCATION</scope>
    <scope>INTERACTION WITH PTPRD; PTPRF AND PTPRS</scope>
    <source>
        <tissue>Brain</tissue>
        <tissue>Fetal brain</tissue>
        <tissue>Heart</tissue>
        <tissue>Kidney</tissue>
    </source>
</reference>
<reference key="2">
    <citation type="journal article" date="2004" name="Nat. Genet.">
        <title>Complete sequencing and characterization of 21,243 full-length human cDNAs.</title>
        <authorList>
            <person name="Ota T."/>
            <person name="Suzuki Y."/>
            <person name="Nishikawa T."/>
            <person name="Otsuki T."/>
            <person name="Sugiyama T."/>
            <person name="Irie R."/>
            <person name="Wakamatsu A."/>
            <person name="Hayashi K."/>
            <person name="Sato H."/>
            <person name="Nagai K."/>
            <person name="Kimura K."/>
            <person name="Makita H."/>
            <person name="Sekine M."/>
            <person name="Obayashi M."/>
            <person name="Nishi T."/>
            <person name="Shibahara T."/>
            <person name="Tanaka T."/>
            <person name="Ishii S."/>
            <person name="Yamamoto J."/>
            <person name="Saito K."/>
            <person name="Kawai Y."/>
            <person name="Isono Y."/>
            <person name="Nakamura Y."/>
            <person name="Nagahari K."/>
            <person name="Murakami K."/>
            <person name="Yasuda T."/>
            <person name="Iwayanagi T."/>
            <person name="Wagatsuma M."/>
            <person name="Shiratori A."/>
            <person name="Sudo H."/>
            <person name="Hosoiri T."/>
            <person name="Kaku Y."/>
            <person name="Kodaira H."/>
            <person name="Kondo H."/>
            <person name="Sugawara M."/>
            <person name="Takahashi M."/>
            <person name="Kanda K."/>
            <person name="Yokoi T."/>
            <person name="Furuya T."/>
            <person name="Kikkawa E."/>
            <person name="Omura Y."/>
            <person name="Abe K."/>
            <person name="Kamihara K."/>
            <person name="Katsuta N."/>
            <person name="Sato K."/>
            <person name="Tanikawa M."/>
            <person name="Yamazaki M."/>
            <person name="Ninomiya K."/>
            <person name="Ishibashi T."/>
            <person name="Yamashita H."/>
            <person name="Murakawa K."/>
            <person name="Fujimori K."/>
            <person name="Tanai H."/>
            <person name="Kimata M."/>
            <person name="Watanabe M."/>
            <person name="Hiraoka S."/>
            <person name="Chiba Y."/>
            <person name="Ishida S."/>
            <person name="Ono Y."/>
            <person name="Takiguchi S."/>
            <person name="Watanabe S."/>
            <person name="Yosida M."/>
            <person name="Hotuta T."/>
            <person name="Kusano J."/>
            <person name="Kanehori K."/>
            <person name="Takahashi-Fujii A."/>
            <person name="Hara H."/>
            <person name="Tanase T.-O."/>
            <person name="Nomura Y."/>
            <person name="Togiya S."/>
            <person name="Komai F."/>
            <person name="Hara R."/>
            <person name="Takeuchi K."/>
            <person name="Arita M."/>
            <person name="Imose N."/>
            <person name="Musashino K."/>
            <person name="Yuuki H."/>
            <person name="Oshima A."/>
            <person name="Sasaki N."/>
            <person name="Aotsuka S."/>
            <person name="Yoshikawa Y."/>
            <person name="Matsunawa H."/>
            <person name="Ichihara T."/>
            <person name="Shiohata N."/>
            <person name="Sano S."/>
            <person name="Moriya S."/>
            <person name="Momiyama H."/>
            <person name="Satoh N."/>
            <person name="Takami S."/>
            <person name="Terashima Y."/>
            <person name="Suzuki O."/>
            <person name="Nakagawa S."/>
            <person name="Senoh A."/>
            <person name="Mizoguchi H."/>
            <person name="Goto Y."/>
            <person name="Shimizu F."/>
            <person name="Wakebe H."/>
            <person name="Hishigaki H."/>
            <person name="Watanabe T."/>
            <person name="Sugiyama A."/>
            <person name="Takemoto M."/>
            <person name="Kawakami B."/>
            <person name="Yamazaki M."/>
            <person name="Watanabe K."/>
            <person name="Kumagai A."/>
            <person name="Itakura S."/>
            <person name="Fukuzumi Y."/>
            <person name="Fujimori Y."/>
            <person name="Komiyama M."/>
            <person name="Tashiro H."/>
            <person name="Tanigami A."/>
            <person name="Fujiwara T."/>
            <person name="Ono T."/>
            <person name="Yamada K."/>
            <person name="Fujii Y."/>
            <person name="Ozaki K."/>
            <person name="Hirao M."/>
            <person name="Ohmori Y."/>
            <person name="Kawabata A."/>
            <person name="Hikiji T."/>
            <person name="Kobatake N."/>
            <person name="Inagaki H."/>
            <person name="Ikema Y."/>
            <person name="Okamoto S."/>
            <person name="Okitani R."/>
            <person name="Kawakami T."/>
            <person name="Noguchi S."/>
            <person name="Itoh T."/>
            <person name="Shigeta K."/>
            <person name="Senba T."/>
            <person name="Matsumura K."/>
            <person name="Nakajima Y."/>
            <person name="Mizuno T."/>
            <person name="Morinaga M."/>
            <person name="Sasaki M."/>
            <person name="Togashi T."/>
            <person name="Oyama M."/>
            <person name="Hata H."/>
            <person name="Watanabe M."/>
            <person name="Komatsu T."/>
            <person name="Mizushima-Sugano J."/>
            <person name="Satoh T."/>
            <person name="Shirai Y."/>
            <person name="Takahashi Y."/>
            <person name="Nakagawa K."/>
            <person name="Okumura K."/>
            <person name="Nagase T."/>
            <person name="Nomura N."/>
            <person name="Kikuchi H."/>
            <person name="Masuho Y."/>
            <person name="Yamashita R."/>
            <person name="Nakai K."/>
            <person name="Yada T."/>
            <person name="Nakamura Y."/>
            <person name="Ohara O."/>
            <person name="Isogai T."/>
            <person name="Sugano S."/>
        </authorList>
    </citation>
    <scope>NUCLEOTIDE SEQUENCE [LARGE SCALE MRNA] (ISOFORMS 2; 5; 6; 7 AND 8)</scope>
    <source>
        <tissue>Amygdala</tissue>
        <tissue>Brain</tissue>
        <tissue>Caudate nucleus</tissue>
        <tissue>Thalamus</tissue>
    </source>
</reference>
<reference key="3">
    <citation type="journal article" date="2006" name="Nature">
        <title>The finished DNA sequence of human chromosome 12.</title>
        <authorList>
            <person name="Scherer S.E."/>
            <person name="Muzny D.M."/>
            <person name="Buhay C.J."/>
            <person name="Chen R."/>
            <person name="Cree A."/>
            <person name="Ding Y."/>
            <person name="Dugan-Rocha S."/>
            <person name="Gill R."/>
            <person name="Gunaratne P."/>
            <person name="Harris R.A."/>
            <person name="Hawes A.C."/>
            <person name="Hernandez J."/>
            <person name="Hodgson A.V."/>
            <person name="Hume J."/>
            <person name="Jackson A."/>
            <person name="Khan Z.M."/>
            <person name="Kovar-Smith C."/>
            <person name="Lewis L.R."/>
            <person name="Lozado R.J."/>
            <person name="Metzker M.L."/>
            <person name="Milosavljevic A."/>
            <person name="Miner G.R."/>
            <person name="Montgomery K.T."/>
            <person name="Morgan M.B."/>
            <person name="Nazareth L.V."/>
            <person name="Scott G."/>
            <person name="Sodergren E."/>
            <person name="Song X.-Z."/>
            <person name="Steffen D."/>
            <person name="Lovering R.C."/>
            <person name="Wheeler D.A."/>
            <person name="Worley K.C."/>
            <person name="Yuan Y."/>
            <person name="Zhang Z."/>
            <person name="Adams C.Q."/>
            <person name="Ansari-Lari M.A."/>
            <person name="Ayele M."/>
            <person name="Brown M.J."/>
            <person name="Chen G."/>
            <person name="Chen Z."/>
            <person name="Clerc-Blankenburg K.P."/>
            <person name="Davis C."/>
            <person name="Delgado O."/>
            <person name="Dinh H.H."/>
            <person name="Draper H."/>
            <person name="Gonzalez-Garay M.L."/>
            <person name="Havlak P."/>
            <person name="Jackson L.R."/>
            <person name="Jacob L.S."/>
            <person name="Kelly S.H."/>
            <person name="Li L."/>
            <person name="Li Z."/>
            <person name="Liu J."/>
            <person name="Liu W."/>
            <person name="Lu J."/>
            <person name="Maheshwari M."/>
            <person name="Nguyen B.-V."/>
            <person name="Okwuonu G.O."/>
            <person name="Pasternak S."/>
            <person name="Perez L.M."/>
            <person name="Plopper F.J.H."/>
            <person name="Santibanez J."/>
            <person name="Shen H."/>
            <person name="Tabor P.E."/>
            <person name="Verduzco D."/>
            <person name="Waldron L."/>
            <person name="Wang Q."/>
            <person name="Williams G.A."/>
            <person name="Zhang J."/>
            <person name="Zhou J."/>
            <person name="Allen C.C."/>
            <person name="Amin A.G."/>
            <person name="Anyalebechi V."/>
            <person name="Bailey M."/>
            <person name="Barbaria J.A."/>
            <person name="Bimage K.E."/>
            <person name="Bryant N.P."/>
            <person name="Burch P.E."/>
            <person name="Burkett C.E."/>
            <person name="Burrell K.L."/>
            <person name="Calderon E."/>
            <person name="Cardenas V."/>
            <person name="Carter K."/>
            <person name="Casias K."/>
            <person name="Cavazos I."/>
            <person name="Cavazos S.R."/>
            <person name="Ceasar H."/>
            <person name="Chacko J."/>
            <person name="Chan S.N."/>
            <person name="Chavez D."/>
            <person name="Christopoulos C."/>
            <person name="Chu J."/>
            <person name="Cockrell R."/>
            <person name="Cox C.D."/>
            <person name="Dang M."/>
            <person name="Dathorne S.R."/>
            <person name="David R."/>
            <person name="Davis C.M."/>
            <person name="Davy-Carroll L."/>
            <person name="Deshazo D.R."/>
            <person name="Donlin J.E."/>
            <person name="D'Souza L."/>
            <person name="Eaves K.A."/>
            <person name="Egan A."/>
            <person name="Emery-Cohen A.J."/>
            <person name="Escotto M."/>
            <person name="Flagg N."/>
            <person name="Forbes L.D."/>
            <person name="Gabisi A.M."/>
            <person name="Garza M."/>
            <person name="Hamilton C."/>
            <person name="Henderson N."/>
            <person name="Hernandez O."/>
            <person name="Hines S."/>
            <person name="Hogues M.E."/>
            <person name="Huang M."/>
            <person name="Idlebird D.G."/>
            <person name="Johnson R."/>
            <person name="Jolivet A."/>
            <person name="Jones S."/>
            <person name="Kagan R."/>
            <person name="King L.M."/>
            <person name="Leal B."/>
            <person name="Lebow H."/>
            <person name="Lee S."/>
            <person name="LeVan J.M."/>
            <person name="Lewis L.C."/>
            <person name="London P."/>
            <person name="Lorensuhewa L.M."/>
            <person name="Loulseged H."/>
            <person name="Lovett D.A."/>
            <person name="Lucier A."/>
            <person name="Lucier R.L."/>
            <person name="Ma J."/>
            <person name="Madu R.C."/>
            <person name="Mapua P."/>
            <person name="Martindale A.D."/>
            <person name="Martinez E."/>
            <person name="Massey E."/>
            <person name="Mawhiney S."/>
            <person name="Meador M.G."/>
            <person name="Mendez S."/>
            <person name="Mercado C."/>
            <person name="Mercado I.C."/>
            <person name="Merritt C.E."/>
            <person name="Miner Z.L."/>
            <person name="Minja E."/>
            <person name="Mitchell T."/>
            <person name="Mohabbat F."/>
            <person name="Mohabbat K."/>
            <person name="Montgomery B."/>
            <person name="Moore N."/>
            <person name="Morris S."/>
            <person name="Munidasa M."/>
            <person name="Ngo R.N."/>
            <person name="Nguyen N.B."/>
            <person name="Nickerson E."/>
            <person name="Nwaokelemeh O.O."/>
            <person name="Nwokenkwo S."/>
            <person name="Obregon M."/>
            <person name="Oguh M."/>
            <person name="Oragunye N."/>
            <person name="Oviedo R.J."/>
            <person name="Parish B.J."/>
            <person name="Parker D.N."/>
            <person name="Parrish J."/>
            <person name="Parks K.L."/>
            <person name="Paul H.A."/>
            <person name="Payton B.A."/>
            <person name="Perez A."/>
            <person name="Perrin W."/>
            <person name="Pickens A."/>
            <person name="Primus E.L."/>
            <person name="Pu L.-L."/>
            <person name="Puazo M."/>
            <person name="Quiles M.M."/>
            <person name="Quiroz J.B."/>
            <person name="Rabata D."/>
            <person name="Reeves K."/>
            <person name="Ruiz S.J."/>
            <person name="Shao H."/>
            <person name="Sisson I."/>
            <person name="Sonaike T."/>
            <person name="Sorelle R.P."/>
            <person name="Sutton A.E."/>
            <person name="Svatek A.F."/>
            <person name="Svetz L.A."/>
            <person name="Tamerisa K.S."/>
            <person name="Taylor T.R."/>
            <person name="Teague B."/>
            <person name="Thomas N."/>
            <person name="Thorn R.D."/>
            <person name="Trejos Z.Y."/>
            <person name="Trevino B.K."/>
            <person name="Ukegbu O.N."/>
            <person name="Urban J.B."/>
            <person name="Vasquez L.I."/>
            <person name="Vera V.A."/>
            <person name="Villasana D.M."/>
            <person name="Wang L."/>
            <person name="Ward-Moore S."/>
            <person name="Warren J.T."/>
            <person name="Wei X."/>
            <person name="White F."/>
            <person name="Williamson A.L."/>
            <person name="Wleczyk R."/>
            <person name="Wooden H.S."/>
            <person name="Wooden S.H."/>
            <person name="Yen J."/>
            <person name="Yoon L."/>
            <person name="Yoon V."/>
            <person name="Zorrilla S.E."/>
            <person name="Nelson D."/>
            <person name="Kucherlapati R."/>
            <person name="Weinstock G."/>
            <person name="Gibbs R.A."/>
        </authorList>
    </citation>
    <scope>NUCLEOTIDE SEQUENCE [LARGE SCALE GENOMIC DNA]</scope>
</reference>
<reference key="4">
    <citation type="journal article" date="2004" name="Genome Res.">
        <title>The status, quality, and expansion of the NIH full-length cDNA project: the Mammalian Gene Collection (MGC).</title>
        <authorList>
            <consortium name="The MGC Project Team"/>
        </authorList>
    </citation>
    <scope>NUCLEOTIDE SEQUENCE [LARGE SCALE MRNA] (ISOFORMS 3 AND 4)</scope>
    <source>
        <tissue>Brain</tissue>
    </source>
</reference>
<reference key="5">
    <citation type="journal article" date="2018" name="Cell Rep.">
        <title>Regulation of KIF1A-Driven Dense Core Vesicle Transport: Ca2+/CaM Controls DCV Binding and Liprin-alpha/TANC2 Recruits DCVs to Postsynaptic Sites.</title>
        <authorList>
            <person name="Stucchi R."/>
            <person name="Plucinska G."/>
            <person name="Hummel J.J.A."/>
            <person name="Zahavi E.E."/>
            <person name="Guerra San Juan I."/>
            <person name="Klykov O."/>
            <person name="Scheltema R.A."/>
            <person name="Altelaar A.F.M."/>
            <person name="Hoogenraad C.C."/>
        </authorList>
    </citation>
    <scope>FUNCTION</scope>
    <scope>INTERACTION WITH KIF1A</scope>
    <scope>SUBCELLULAR LOCATION</scope>
</reference>
<accession>O75334</accession>
<accession>B3KVT5</accession>
<accession>B3KXA0</accession>
<accession>B7Z2A6</accession>
<accession>B7Z3U9</accession>
<accession>B7Z663</accession>
<accession>B7ZKZ5</accession>
<accession>E7ERB8</accession>
<accession>E7ETG6</accession>
<accession>F8VP68</accession>
<accession>Q2M3G8</accession>
<protein>
    <recommendedName>
        <fullName>Liprin-alpha-2</fullName>
    </recommendedName>
    <alternativeName>
        <fullName>Protein tyrosine phosphatase receptor type f polypeptide-interacting protein alpha-2</fullName>
        <shortName>PTPRF-interacting protein alpha-2</shortName>
    </alternativeName>
</protein>
<proteinExistence type="evidence at protein level"/>
<evidence type="ECO:0000250" key="1">
    <source>
        <dbReference type="UniProtKB" id="Q8BSS9"/>
    </source>
</evidence>
<evidence type="ECO:0000255" key="2"/>
<evidence type="ECO:0000255" key="3">
    <source>
        <dbReference type="PROSITE-ProRule" id="PRU00184"/>
    </source>
</evidence>
<evidence type="ECO:0000256" key="4">
    <source>
        <dbReference type="SAM" id="MobiDB-lite"/>
    </source>
</evidence>
<evidence type="ECO:0000269" key="5">
    <source>
    </source>
</evidence>
<evidence type="ECO:0000269" key="6">
    <source>
    </source>
</evidence>
<evidence type="ECO:0000303" key="7">
    <source>
    </source>
</evidence>
<evidence type="ECO:0000303" key="8">
    <source>
    </source>
</evidence>
<evidence type="ECO:0000305" key="9"/>
<evidence type="ECO:0007829" key="10">
    <source>
        <dbReference type="PDB" id="3TAC"/>
    </source>
</evidence>
<evidence type="ECO:0007829" key="11">
    <source>
        <dbReference type="PDB" id="3TAD"/>
    </source>
</evidence>
<evidence type="ECO:0007829" key="12">
    <source>
        <dbReference type="PDB" id="6IUH"/>
    </source>
</evidence>
<evidence type="ECO:0007829" key="13">
    <source>
        <dbReference type="PDB" id="7D2E"/>
    </source>
</evidence>
<evidence type="ECO:0007829" key="14">
    <source>
        <dbReference type="PDB" id="7D2G"/>
    </source>
</evidence>
<gene>
    <name type="primary">PPFIA2</name>
</gene>
<organism>
    <name type="scientific">Homo sapiens</name>
    <name type="common">Human</name>
    <dbReference type="NCBI Taxonomy" id="9606"/>
    <lineage>
        <taxon>Eukaryota</taxon>
        <taxon>Metazoa</taxon>
        <taxon>Chordata</taxon>
        <taxon>Craniata</taxon>
        <taxon>Vertebrata</taxon>
        <taxon>Euteleostomi</taxon>
        <taxon>Mammalia</taxon>
        <taxon>Eutheria</taxon>
        <taxon>Euarchontoglires</taxon>
        <taxon>Primates</taxon>
        <taxon>Haplorrhini</taxon>
        <taxon>Catarrhini</taxon>
        <taxon>Hominidae</taxon>
        <taxon>Homo</taxon>
    </lineage>
</organism>
<comment type="function">
    <text evidence="5 6">Alters PTPRF cellular localization and induces PTPRF clustering. May regulate the disassembly of focal adhesions. May localize receptor-like tyrosine phosphatases type 2A at specific sites on the plasma membrane, possibly regulating their interaction with the extracellular environment and their association with substrates. In neuronal cells, is a scaffolding protein in the dendritic spines which acts as immobile postsynaptic post able to recruit KIF1A-driven dense core vesicles to dendritic spines (PubMed:30021165).</text>
</comment>
<comment type="subunit">
    <text evidence="5 6">Forms homodimers and heterodimers with liprins-alpha and liprins-beta. Interacts with the second PTPase domain of PTPRD, PTPRF and PTPRS. Interacts with KIF1A; the interaction decreases in presence of calcium (PubMed:30021165).</text>
</comment>
<comment type="subcellular location">
    <subcellularLocation>
        <location evidence="6">Cytoplasm</location>
    </subcellularLocation>
    <subcellularLocation>
        <location evidence="6">Cell surface</location>
    </subcellularLocation>
    <subcellularLocation>
        <location evidence="5">Cell projection</location>
        <location evidence="5">Dendritic spine</location>
    </subcellularLocation>
    <text>Colocalizes with PTPRF at the cell surface.</text>
</comment>
<comment type="alternative products">
    <event type="alternative splicing"/>
    <isoform>
        <id>O75334-1</id>
        <name>1</name>
        <sequence type="displayed"/>
    </isoform>
    <isoform>
        <id>O75334-2</id>
        <name>2</name>
        <sequence type="described" ref="VSP_043819 VSP_043820 VSP_043823"/>
    </isoform>
    <isoform>
        <id>O75334-3</id>
        <name>3</name>
        <sequence type="described" ref="VSP_043822"/>
    </isoform>
    <isoform>
        <id>O75334-4</id>
        <name>4</name>
        <sequence type="described" ref="VSP_043821"/>
    </isoform>
    <isoform>
        <id>O75334-5</id>
        <name>5</name>
        <sequence type="described" ref="VSP_046720 VSP_046721 VSP_043821 VSP_043822"/>
    </isoform>
    <isoform>
        <id>O75334-6</id>
        <name>6</name>
        <sequence type="described" ref="VSP_046720 VSP_046721 VSP_046722 VSP_043822"/>
    </isoform>
    <isoform>
        <id>O75334-7</id>
        <name>7</name>
        <sequence type="described" ref="VSP_046719 VSP_046723 VSP_043823"/>
    </isoform>
    <isoform>
        <id>O75334-8</id>
        <name>8</name>
        <sequence type="described" ref="VSP_046718 VSP_046723"/>
    </isoform>
</comment>
<comment type="tissue specificity">
    <text evidence="6">Expressed only in brain.</text>
</comment>
<comment type="domain">
    <text>The N-terminal coiled coil regions mediate homodimerization preferentially and heterodimerization type alpha/alpha. The C-terminal, non-coiled coil regions mediate heterodimerization type alpha/beta and interaction with PTPRD, PTPRF and PTPRS.</text>
</comment>
<comment type="similarity">
    <text evidence="9">Belongs to the liprin family. Liprin-alpha subfamily.</text>
</comment>
<feature type="chain" id="PRO_0000191027" description="Liprin-alpha-2">
    <location>
        <begin position="1"/>
        <end position="1257"/>
    </location>
</feature>
<feature type="domain" description="SAM 1" evidence="3">
    <location>
        <begin position="898"/>
        <end position="964"/>
    </location>
</feature>
<feature type="domain" description="SAM 2" evidence="3">
    <location>
        <begin position="1020"/>
        <end position="1084"/>
    </location>
</feature>
<feature type="domain" description="SAM 3" evidence="3">
    <location>
        <begin position="1108"/>
        <end position="1177"/>
    </location>
</feature>
<feature type="region of interest" description="Disordered" evidence="4">
    <location>
        <begin position="1"/>
        <end position="29"/>
    </location>
</feature>
<feature type="region of interest" description="Disordered" evidence="4">
    <location>
        <begin position="231"/>
        <end position="265"/>
    </location>
</feature>
<feature type="region of interest" description="Disordered" evidence="4">
    <location>
        <begin position="438"/>
        <end position="463"/>
    </location>
</feature>
<feature type="region of interest" description="Disordered" evidence="4">
    <location>
        <begin position="709"/>
        <end position="738"/>
    </location>
</feature>
<feature type="region of interest" description="Disordered" evidence="4">
    <location>
        <begin position="790"/>
        <end position="834"/>
    </location>
</feature>
<feature type="coiled-coil region" evidence="2">
    <location>
        <begin position="29"/>
        <end position="154"/>
    </location>
</feature>
<feature type="coiled-coil region" evidence="2">
    <location>
        <begin position="185"/>
        <end position="541"/>
    </location>
</feature>
<feature type="coiled-coil region" evidence="2">
    <location>
        <begin position="643"/>
        <end position="695"/>
    </location>
</feature>
<feature type="coiled-coil region" evidence="2">
    <location>
        <begin position="1081"/>
        <end position="1107"/>
    </location>
</feature>
<feature type="compositionally biased region" description="Low complexity" evidence="4">
    <location>
        <begin position="16"/>
        <end position="26"/>
    </location>
</feature>
<feature type="compositionally biased region" description="Basic and acidic residues" evidence="4">
    <location>
        <begin position="238"/>
        <end position="256"/>
    </location>
</feature>
<feature type="compositionally biased region" description="Low complexity" evidence="4">
    <location>
        <begin position="709"/>
        <end position="725"/>
    </location>
</feature>
<feature type="compositionally biased region" description="Low complexity" evidence="4">
    <location>
        <begin position="798"/>
        <end position="813"/>
    </location>
</feature>
<feature type="modified residue" description="Phosphoserine" evidence="1">
    <location>
        <position position="236"/>
    </location>
</feature>
<feature type="modified residue" description="Phosphothreonine" evidence="1">
    <location>
        <position position="237"/>
    </location>
</feature>
<feature type="modified residue" description="Phosphoserine" evidence="1">
    <location>
        <position position="239"/>
    </location>
</feature>
<feature type="modified residue" description="Phosphoserine" evidence="1">
    <location>
        <position position="687"/>
    </location>
</feature>
<feature type="modified residue" description="Phosphoserine" evidence="1">
    <location>
        <position position="689"/>
    </location>
</feature>
<feature type="modified residue" description="Phosphoserine" evidence="1">
    <location>
        <position position="817"/>
    </location>
</feature>
<feature type="modified residue" description="Phosphoserine" evidence="1">
    <location>
        <position position="820"/>
    </location>
</feature>
<feature type="splice variant" id="VSP_046718" description="In isoform 8." evidence="7">
    <location>
        <begin position="1"/>
        <end position="783"/>
    </location>
</feature>
<feature type="splice variant" id="VSP_046719" description="In isoform 7." evidence="7">
    <location>
        <begin position="1"/>
        <end position="433"/>
    </location>
</feature>
<feature type="splice variant" id="VSP_046720" description="In isoform 5 and isoform 6." evidence="7">
    <location>
        <begin position="1"/>
        <end position="74"/>
    </location>
</feature>
<feature type="splice variant" id="VSP_046721" description="In isoform 5 and isoform 6." evidence="7">
    <original>RQLNSALPQDIESLTGGLAGSKGADPP</original>
    <variation>MIFSDMNTVSGSPKVHPPNGTRFYTFQ</variation>
    <location>
        <begin position="75"/>
        <end position="101"/>
    </location>
</feature>
<feature type="splice variant" id="VSP_043819" description="In isoform 2." evidence="7">
    <location>
        <begin position="84"/>
        <end position="101"/>
    </location>
</feature>
<feature type="splice variant" id="VSP_046722" description="In isoform 6." evidence="7">
    <location>
        <begin position="191"/>
        <end position="215"/>
    </location>
</feature>
<feature type="splice variant" id="VSP_043820" description="In isoform 2." evidence="7">
    <original>K</original>
    <variation>NTSG</variation>
    <location>
        <position position="881"/>
    </location>
</feature>
<feature type="splice variant" id="VSP_046723" description="In isoform 7 and isoform 8." evidence="7">
    <location>
        <begin position="976"/>
        <end position="1006"/>
    </location>
</feature>
<feature type="splice variant" id="VSP_043821" description="In isoform 4 and isoform 5." evidence="7 8">
    <location>
        <begin position="976"/>
        <end position="996"/>
    </location>
</feature>
<feature type="splice variant" id="VSP_043822" description="In isoform 3, isoform 5 and isoform 6." evidence="7 8">
    <location>
        <begin position="1007"/>
        <end position="1012"/>
    </location>
</feature>
<feature type="splice variant" id="VSP_043823" description="In isoform 2 and isoform 7." evidence="7">
    <original>VASSRLQRLDNSTVRTYSC</original>
    <variation>DGVFSVYST</variation>
    <location>
        <begin position="1239"/>
        <end position="1257"/>
    </location>
</feature>
<feature type="sequence conflict" description="In Ref. 1; AAC26100." evidence="9" ref="1">
    <original>Q</original>
    <variation>E</variation>
    <location>
        <position position="394"/>
    </location>
</feature>
<feature type="sequence conflict" description="In Ref. 1; AAC26100." evidence="9" ref="1">
    <original>R</original>
    <variation>T</variation>
    <location>
        <position position="426"/>
    </location>
</feature>
<feature type="sequence conflict" description="In Ref. 1; AAC26100." evidence="9" ref="1">
    <original>R</original>
    <variation>S</variation>
    <location>
        <position position="517"/>
    </location>
</feature>
<feature type="sequence conflict" description="In Ref. 2; BAH11792." evidence="9" ref="2">
    <original>E</original>
    <variation>G</variation>
    <location>
        <position position="523"/>
    </location>
</feature>
<feature type="sequence conflict" description="In Ref. 1; AAC26100." evidence="9" ref="1">
    <original>R</original>
    <variation>M</variation>
    <location>
        <position position="697"/>
    </location>
</feature>
<feature type="helix" evidence="14">
    <location>
        <begin position="102"/>
        <end position="147"/>
    </location>
</feature>
<feature type="helix" evidence="13">
    <location>
        <begin position="170"/>
        <end position="228"/>
    </location>
</feature>
<feature type="helix" evidence="12">
    <location>
        <begin position="646"/>
        <end position="667"/>
    </location>
</feature>
<feature type="helix" evidence="10">
    <location>
        <begin position="874"/>
        <end position="890"/>
    </location>
</feature>
<feature type="helix" evidence="10">
    <location>
        <begin position="895"/>
        <end position="897"/>
    </location>
</feature>
<feature type="helix" evidence="10">
    <location>
        <begin position="900"/>
        <end position="909"/>
    </location>
</feature>
<feature type="helix" evidence="10">
    <location>
        <begin position="915"/>
        <end position="924"/>
    </location>
</feature>
<feature type="helix" evidence="10">
    <location>
        <begin position="928"/>
        <end position="932"/>
    </location>
</feature>
<feature type="helix" evidence="10">
    <location>
        <begin position="936"/>
        <end position="941"/>
    </location>
</feature>
<feature type="helix" evidence="10">
    <location>
        <begin position="948"/>
        <end position="964"/>
    </location>
</feature>
<feature type="helix" evidence="10">
    <location>
        <begin position="971"/>
        <end position="973"/>
    </location>
</feature>
<feature type="helix" evidence="10">
    <location>
        <begin position="984"/>
        <end position="994"/>
    </location>
</feature>
<feature type="helix" evidence="10">
    <location>
        <begin position="1021"/>
        <end position="1026"/>
    </location>
</feature>
<feature type="helix" evidence="10">
    <location>
        <begin position="1028"/>
        <end position="1031"/>
    </location>
</feature>
<feature type="helix" evidence="10">
    <location>
        <begin position="1035"/>
        <end position="1037"/>
    </location>
</feature>
<feature type="helix" evidence="10">
    <location>
        <begin position="1038"/>
        <end position="1043"/>
    </location>
</feature>
<feature type="helix" evidence="10">
    <location>
        <begin position="1048"/>
        <end position="1051"/>
    </location>
</feature>
<feature type="helix" evidence="10">
    <location>
        <begin position="1056"/>
        <end position="1061"/>
    </location>
</feature>
<feature type="helix" evidence="10">
    <location>
        <begin position="1068"/>
        <end position="1083"/>
    </location>
</feature>
<feature type="turn" evidence="10">
    <location>
        <begin position="1084"/>
        <end position="1086"/>
    </location>
</feature>
<feature type="helix" evidence="10">
    <location>
        <begin position="1088"/>
        <end position="1097"/>
    </location>
</feature>
<feature type="strand" evidence="10">
    <location>
        <begin position="1099"/>
        <end position="1102"/>
    </location>
</feature>
<feature type="helix" evidence="10">
    <location>
        <begin position="1105"/>
        <end position="1107"/>
    </location>
</feature>
<feature type="helix" evidence="10">
    <location>
        <begin position="1110"/>
        <end position="1119"/>
    </location>
</feature>
<feature type="helix" evidence="10">
    <location>
        <begin position="1123"/>
        <end position="1126"/>
    </location>
</feature>
<feature type="helix" evidence="10">
    <location>
        <begin position="1127"/>
        <end position="1129"/>
    </location>
</feature>
<feature type="strand" evidence="11">
    <location>
        <begin position="1130"/>
        <end position="1132"/>
    </location>
</feature>
<feature type="helix" evidence="10">
    <location>
        <begin position="1136"/>
        <end position="1141"/>
    </location>
</feature>
<feature type="helix" evidence="10">
    <location>
        <begin position="1147"/>
        <end position="1153"/>
    </location>
</feature>
<feature type="helix" evidence="10">
    <location>
        <begin position="1161"/>
        <end position="1178"/>
    </location>
</feature>